<reference key="1">
    <citation type="journal article" date="2010" name="Genome Biol.">
        <title>Structure and dynamics of the pan-genome of Streptococcus pneumoniae and closely related species.</title>
        <authorList>
            <person name="Donati C."/>
            <person name="Hiller N.L."/>
            <person name="Tettelin H."/>
            <person name="Muzzi A."/>
            <person name="Croucher N.J."/>
            <person name="Angiuoli S.V."/>
            <person name="Oggioni M."/>
            <person name="Dunning Hotopp J.C."/>
            <person name="Hu F.Z."/>
            <person name="Riley D.R."/>
            <person name="Covacci A."/>
            <person name="Mitchell T.J."/>
            <person name="Bentley S.D."/>
            <person name="Kilian M."/>
            <person name="Ehrlich G.D."/>
            <person name="Rappuoli R."/>
            <person name="Moxon E.R."/>
            <person name="Masignani V."/>
        </authorList>
    </citation>
    <scope>NUCLEOTIDE SEQUENCE [LARGE SCALE GENOMIC DNA]</scope>
    <source>
        <strain>70585</strain>
    </source>
</reference>
<gene>
    <name evidence="1" type="primary">smpB</name>
    <name type="ordered locus">SP70585_1016</name>
</gene>
<protein>
    <recommendedName>
        <fullName evidence="1">SsrA-binding protein</fullName>
    </recommendedName>
    <alternativeName>
        <fullName evidence="1">Small protein B</fullName>
    </alternativeName>
</protein>
<evidence type="ECO:0000255" key="1">
    <source>
        <dbReference type="HAMAP-Rule" id="MF_00023"/>
    </source>
</evidence>
<keyword id="KW-0963">Cytoplasm</keyword>
<keyword id="KW-0694">RNA-binding</keyword>
<dbReference type="EMBL" id="CP000918">
    <property type="protein sequence ID" value="ACO16330.1"/>
    <property type="molecule type" value="Genomic_DNA"/>
</dbReference>
<dbReference type="RefSeq" id="WP_001051754.1">
    <property type="nucleotide sequence ID" value="NC_012468.1"/>
</dbReference>
<dbReference type="SMR" id="C1C6V3"/>
<dbReference type="KEGG" id="snm:SP70585_1016"/>
<dbReference type="HOGENOM" id="CLU_108953_0_0_9"/>
<dbReference type="Proteomes" id="UP000002211">
    <property type="component" value="Chromosome"/>
</dbReference>
<dbReference type="GO" id="GO:0005829">
    <property type="term" value="C:cytosol"/>
    <property type="evidence" value="ECO:0007669"/>
    <property type="project" value="TreeGrafter"/>
</dbReference>
<dbReference type="GO" id="GO:0003723">
    <property type="term" value="F:RNA binding"/>
    <property type="evidence" value="ECO:0007669"/>
    <property type="project" value="UniProtKB-UniRule"/>
</dbReference>
<dbReference type="GO" id="GO:0070929">
    <property type="term" value="P:trans-translation"/>
    <property type="evidence" value="ECO:0007669"/>
    <property type="project" value="UniProtKB-UniRule"/>
</dbReference>
<dbReference type="CDD" id="cd09294">
    <property type="entry name" value="SmpB"/>
    <property type="match status" value="1"/>
</dbReference>
<dbReference type="Gene3D" id="2.40.280.10">
    <property type="match status" value="1"/>
</dbReference>
<dbReference type="HAMAP" id="MF_00023">
    <property type="entry name" value="SmpB"/>
    <property type="match status" value="1"/>
</dbReference>
<dbReference type="InterPro" id="IPR023620">
    <property type="entry name" value="SmpB"/>
</dbReference>
<dbReference type="InterPro" id="IPR000037">
    <property type="entry name" value="SsrA-bd_prot"/>
</dbReference>
<dbReference type="InterPro" id="IPR020081">
    <property type="entry name" value="SsrA-bd_prot_CS"/>
</dbReference>
<dbReference type="NCBIfam" id="NF003843">
    <property type="entry name" value="PRK05422.1"/>
    <property type="match status" value="1"/>
</dbReference>
<dbReference type="NCBIfam" id="TIGR00086">
    <property type="entry name" value="smpB"/>
    <property type="match status" value="1"/>
</dbReference>
<dbReference type="PANTHER" id="PTHR30308:SF2">
    <property type="entry name" value="SSRA-BINDING PROTEIN"/>
    <property type="match status" value="1"/>
</dbReference>
<dbReference type="PANTHER" id="PTHR30308">
    <property type="entry name" value="TMRNA-BINDING COMPONENT OF TRANS-TRANSLATION TAGGING COMPLEX"/>
    <property type="match status" value="1"/>
</dbReference>
<dbReference type="Pfam" id="PF01668">
    <property type="entry name" value="SmpB"/>
    <property type="match status" value="1"/>
</dbReference>
<dbReference type="SUPFAM" id="SSF74982">
    <property type="entry name" value="Small protein B (SmpB)"/>
    <property type="match status" value="1"/>
</dbReference>
<dbReference type="PROSITE" id="PS01317">
    <property type="entry name" value="SSRP"/>
    <property type="match status" value="1"/>
</dbReference>
<feature type="chain" id="PRO_1000197626" description="SsrA-binding protein">
    <location>
        <begin position="1"/>
        <end position="155"/>
    </location>
</feature>
<sequence>MAKGEGKVVAQNKKARHDYTIVDTLEAGMVLTGTEIKSVRAARINLKDGFAQVKNGEVWLSNVHIAPYEEGNIWNQEPERRRKLLLYKKQIQKLEQETKGTGMTLVPLKVYIKDGYAKLLLGLAKGKHDYDKRESIKRREQNRDIARVMKAVNQR</sequence>
<name>SSRP_STRP7</name>
<comment type="function">
    <text evidence="1">Required for rescue of stalled ribosomes mediated by trans-translation. Binds to transfer-messenger RNA (tmRNA), required for stable association of tmRNA with ribosomes. tmRNA and SmpB together mimic tRNA shape, replacing the anticodon stem-loop with SmpB. tmRNA is encoded by the ssrA gene; the 2 termini fold to resemble tRNA(Ala) and it encodes a 'tag peptide', a short internal open reading frame. During trans-translation Ala-aminoacylated tmRNA acts like a tRNA, entering the A-site of stalled ribosomes, displacing the stalled mRNA. The ribosome then switches to translate the ORF on the tmRNA; the nascent peptide is terminated with the 'tag peptide' encoded by the tmRNA and targeted for degradation. The ribosome is freed to recommence translation, which seems to be the essential function of trans-translation.</text>
</comment>
<comment type="subcellular location">
    <subcellularLocation>
        <location evidence="1">Cytoplasm</location>
    </subcellularLocation>
    <text evidence="1">The tmRNA-SmpB complex associates with stalled 70S ribosomes.</text>
</comment>
<comment type="similarity">
    <text evidence="1">Belongs to the SmpB family.</text>
</comment>
<proteinExistence type="inferred from homology"/>
<accession>C1C6V3</accession>
<organism>
    <name type="scientific">Streptococcus pneumoniae (strain 70585)</name>
    <dbReference type="NCBI Taxonomy" id="488221"/>
    <lineage>
        <taxon>Bacteria</taxon>
        <taxon>Bacillati</taxon>
        <taxon>Bacillota</taxon>
        <taxon>Bacilli</taxon>
        <taxon>Lactobacillales</taxon>
        <taxon>Streptococcaceae</taxon>
        <taxon>Streptococcus</taxon>
    </lineage>
</organism>